<feature type="chain" id="PRO_0000207960" description="Protein PsbN">
    <location>
        <begin position="1"/>
        <end position="43"/>
    </location>
</feature>
<feature type="transmembrane region" description="Helical" evidence="1">
    <location>
        <begin position="5"/>
        <end position="27"/>
    </location>
</feature>
<geneLocation type="chloroplast"/>
<protein>
    <recommendedName>
        <fullName evidence="1">Protein PsbN</fullName>
    </recommendedName>
</protein>
<keyword id="KW-0150">Chloroplast</keyword>
<keyword id="KW-0472">Membrane</keyword>
<keyword id="KW-0934">Plastid</keyword>
<keyword id="KW-0793">Thylakoid</keyword>
<keyword id="KW-0812">Transmembrane</keyword>
<keyword id="KW-1133">Transmembrane helix</keyword>
<comment type="function">
    <text evidence="1">May play a role in photosystem I and II biogenesis.</text>
</comment>
<comment type="subcellular location">
    <subcellularLocation>
        <location evidence="1">Plastid</location>
        <location evidence="1">Chloroplast thylakoid membrane</location>
        <topology evidence="1">Single-pass membrane protein</topology>
    </subcellularLocation>
</comment>
<comment type="similarity">
    <text evidence="1">Belongs to the PsbN family.</text>
</comment>
<comment type="caution">
    <text evidence="1">Originally thought to be a component of PSII; based on experiments in Synechocystis, N.tabacum and barley, and its absence from PSII in T.elongatus and T.vulcanus, this is probably not true.</text>
</comment>
<dbReference type="EMBL" id="AF469712">
    <property type="protein sequence ID" value="AAQ18553.1"/>
    <property type="molecule type" value="Genomic_DNA"/>
</dbReference>
<dbReference type="RefSeq" id="YP_009113826.1">
    <property type="nucleotide sequence ID" value="NC_026041.1"/>
</dbReference>
<dbReference type="SMR" id="Q71L86"/>
<dbReference type="GeneID" id="23525939"/>
<dbReference type="GO" id="GO:0009535">
    <property type="term" value="C:chloroplast thylakoid membrane"/>
    <property type="evidence" value="ECO:0007669"/>
    <property type="project" value="UniProtKB-SubCell"/>
</dbReference>
<dbReference type="GO" id="GO:0015979">
    <property type="term" value="P:photosynthesis"/>
    <property type="evidence" value="ECO:0007669"/>
    <property type="project" value="InterPro"/>
</dbReference>
<dbReference type="HAMAP" id="MF_00293">
    <property type="entry name" value="PSII_PsbN"/>
    <property type="match status" value="1"/>
</dbReference>
<dbReference type="InterPro" id="IPR003398">
    <property type="entry name" value="PSII_PsbN"/>
</dbReference>
<dbReference type="PANTHER" id="PTHR35326">
    <property type="entry name" value="PROTEIN PSBN"/>
    <property type="match status" value="1"/>
</dbReference>
<dbReference type="PANTHER" id="PTHR35326:SF3">
    <property type="entry name" value="PROTEIN PSBN"/>
    <property type="match status" value="1"/>
</dbReference>
<dbReference type="Pfam" id="PF02468">
    <property type="entry name" value="PsbN"/>
    <property type="match status" value="1"/>
</dbReference>
<proteinExistence type="inferred from homology"/>
<gene>
    <name evidence="1" type="primary">psbN</name>
</gene>
<organism>
    <name type="scientific">Stangeria eriopus</name>
    <name type="common">Natal grass cycad</name>
    <name type="synonym">Lomaria eriopus</name>
    <dbReference type="NCBI Taxonomy" id="34343"/>
    <lineage>
        <taxon>Eukaryota</taxon>
        <taxon>Viridiplantae</taxon>
        <taxon>Streptophyta</taxon>
        <taxon>Embryophyta</taxon>
        <taxon>Tracheophyta</taxon>
        <taxon>Spermatophyta</taxon>
        <taxon>Cycadidae</taxon>
        <taxon>Cycadales</taxon>
        <taxon>Zamiaceae</taxon>
        <taxon>Stangeria</taxon>
    </lineage>
</organism>
<evidence type="ECO:0000255" key="1">
    <source>
        <dbReference type="HAMAP-Rule" id="MF_00293"/>
    </source>
</evidence>
<reference key="1">
    <citation type="journal article" date="2003" name="Mol. Phylogenet. Evol.">
        <title>Inference of higher-order relationships in the cycads from a large chloroplast data set.</title>
        <authorList>
            <person name="Rai H.S."/>
            <person name="O'Brien H.E."/>
            <person name="Reeves P.A."/>
            <person name="Olmstead R.G."/>
            <person name="Graham S.W."/>
        </authorList>
    </citation>
    <scope>NUCLEOTIDE SEQUENCE [GENOMIC DNA]</scope>
</reference>
<name>PSBN_STAER</name>
<accession>Q71L86</accession>
<sequence length="43" mass="4834">METATLVAISISRLLVSFTGYALYTAFGQPSEQLRDPFEEHED</sequence>